<dbReference type="EMBL" id="FM242711">
    <property type="protein sequence ID" value="CAS05380.1"/>
    <property type="molecule type" value="Genomic_DNA"/>
</dbReference>
<dbReference type="RefSeq" id="WP_003727363.1">
    <property type="nucleotide sequence ID" value="NC_012488.1"/>
</dbReference>
<dbReference type="KEGG" id="lmc:Lm4b_01619"/>
<dbReference type="HOGENOM" id="CLU_085634_0_0_9"/>
<dbReference type="HAMAP" id="MF_01548">
    <property type="entry name" value="UPF0354"/>
    <property type="match status" value="1"/>
</dbReference>
<dbReference type="InterPro" id="IPR010838">
    <property type="entry name" value="DUF1444"/>
</dbReference>
<dbReference type="NCBIfam" id="NF010189">
    <property type="entry name" value="PRK13668.1"/>
    <property type="match status" value="1"/>
</dbReference>
<dbReference type="Pfam" id="PF07285">
    <property type="entry name" value="DUF1444"/>
    <property type="match status" value="1"/>
</dbReference>
<dbReference type="PIRSF" id="PIRSF012562">
    <property type="entry name" value="UCP012562"/>
    <property type="match status" value="1"/>
</dbReference>
<proteinExistence type="inferred from homology"/>
<organism>
    <name type="scientific">Listeria monocytogenes serotype 4b (strain CLIP80459)</name>
    <dbReference type="NCBI Taxonomy" id="568819"/>
    <lineage>
        <taxon>Bacteria</taxon>
        <taxon>Bacillati</taxon>
        <taxon>Bacillota</taxon>
        <taxon>Bacilli</taxon>
        <taxon>Bacillales</taxon>
        <taxon>Listeriaceae</taxon>
        <taxon>Listeria</taxon>
    </lineage>
</organism>
<feature type="chain" id="PRO_1000215462" description="UPF0354 protein Lm4b_01619">
    <location>
        <begin position="1"/>
        <end position="266"/>
    </location>
</feature>
<name>Y1619_LISMC</name>
<protein>
    <recommendedName>
        <fullName evidence="1">UPF0354 protein Lm4b_01619</fullName>
    </recommendedName>
</protein>
<reference key="1">
    <citation type="journal article" date="2012" name="BMC Genomics">
        <title>Comparative genomics and transcriptomics of lineages I, II, and III strains of Listeria monocytogenes.</title>
        <authorList>
            <person name="Hain T."/>
            <person name="Ghai R."/>
            <person name="Billion A."/>
            <person name="Kuenne C.T."/>
            <person name="Steinweg C."/>
            <person name="Izar B."/>
            <person name="Mohamed W."/>
            <person name="Mraheil M."/>
            <person name="Domann E."/>
            <person name="Schaffrath S."/>
            <person name="Karst U."/>
            <person name="Goesmann A."/>
            <person name="Oehm S."/>
            <person name="Puhler A."/>
            <person name="Merkl R."/>
            <person name="Vorwerk S."/>
            <person name="Glaser P."/>
            <person name="Garrido P."/>
            <person name="Rusniok C."/>
            <person name="Buchrieser C."/>
            <person name="Goebel W."/>
            <person name="Chakraborty T."/>
        </authorList>
    </citation>
    <scope>NUCLEOTIDE SEQUENCE [LARGE SCALE GENOMIC DNA]</scope>
    <source>
        <strain>CLIP80459</strain>
    </source>
</reference>
<evidence type="ECO:0000255" key="1">
    <source>
        <dbReference type="HAMAP-Rule" id="MF_01548"/>
    </source>
</evidence>
<accession>C1KVQ5</accession>
<gene>
    <name type="ordered locus">Lm4b_01619</name>
</gene>
<sequence>MAKMTTLKMKEKLEKELQAPNRQFSYNRDNDTLTVAQNGKKVTLTIPQIIANFENDGNAAVEKIVYYVEEGFRAAAGNVELENNKASIYPVVRATSFPDETKAGEALLTDDHTAETKIFYAVDLGKSYRFIEESMLKKAQLTHKEIREVAFNNLANLEIPLKKDSVNGNDFYFVRTNDGYDASRLLNEAFLREMREKLTGEMVLAVPHQDVLIIGDIQDNTGYDVLAHMTMDFFADGLVPITSLPFVYNNGKLEPIFIMAKNRLKE</sequence>
<comment type="similarity">
    <text evidence="1">Belongs to the UPF0354 family.</text>
</comment>